<sequence>MNPEYRNKKIENKIRGLISEGLQKIKVPEIDALKSYIVISRVLVSKDKRFADVFVSYIGDADSRKRAVELLEKYKGFFRKYIAQNLRIYTTPELRFKEDIGIEESIRINKLLDEISKNNKNISDK</sequence>
<protein>
    <recommendedName>
        <fullName evidence="1">Ribosome-binding factor A</fullName>
    </recommendedName>
</protein>
<keyword id="KW-0963">Cytoplasm</keyword>
<keyword id="KW-0690">Ribosome biogenesis</keyword>
<name>RBFA_THEM4</name>
<reference key="1">
    <citation type="submission" date="2007-05" db="EMBL/GenBank/DDBJ databases">
        <title>Complete sequence of Thermosipho melanesiensis BI429.</title>
        <authorList>
            <consortium name="US DOE Joint Genome Institute"/>
            <person name="Copeland A."/>
            <person name="Lucas S."/>
            <person name="Lapidus A."/>
            <person name="Barry K."/>
            <person name="Glavina del Rio T."/>
            <person name="Dalin E."/>
            <person name="Tice H."/>
            <person name="Pitluck S."/>
            <person name="Chertkov O."/>
            <person name="Brettin T."/>
            <person name="Bruce D."/>
            <person name="Detter J.C."/>
            <person name="Han C."/>
            <person name="Schmutz J."/>
            <person name="Larimer F."/>
            <person name="Land M."/>
            <person name="Hauser L."/>
            <person name="Kyrpides N."/>
            <person name="Mikhailova N."/>
            <person name="Nelson K."/>
            <person name="Gogarten J.P."/>
            <person name="Noll K."/>
            <person name="Richardson P."/>
        </authorList>
    </citation>
    <scope>NUCLEOTIDE SEQUENCE [LARGE SCALE GENOMIC DNA]</scope>
    <source>
        <strain>DSM 12029 / CIP 104789 / BI429</strain>
    </source>
</reference>
<accession>A6LN42</accession>
<proteinExistence type="inferred from homology"/>
<comment type="function">
    <text evidence="1">One of several proteins that assist in the late maturation steps of the functional core of the 30S ribosomal subunit. Associates with free 30S ribosomal subunits (but not with 30S subunits that are part of 70S ribosomes or polysomes). Required for efficient processing of 16S rRNA. May interact with the 5'-terminal helix region of 16S rRNA.</text>
</comment>
<comment type="subunit">
    <text evidence="1">Monomer. Binds 30S ribosomal subunits, but not 50S ribosomal subunits or 70S ribosomes.</text>
</comment>
<comment type="subcellular location">
    <subcellularLocation>
        <location evidence="1">Cytoplasm</location>
    </subcellularLocation>
</comment>
<comment type="similarity">
    <text evidence="1">Belongs to the RbfA family.</text>
</comment>
<evidence type="ECO:0000255" key="1">
    <source>
        <dbReference type="HAMAP-Rule" id="MF_00003"/>
    </source>
</evidence>
<organism>
    <name type="scientific">Thermosipho melanesiensis (strain DSM 12029 / CIP 104789 / BI429)</name>
    <dbReference type="NCBI Taxonomy" id="391009"/>
    <lineage>
        <taxon>Bacteria</taxon>
        <taxon>Thermotogati</taxon>
        <taxon>Thermotogota</taxon>
        <taxon>Thermotogae</taxon>
        <taxon>Thermotogales</taxon>
        <taxon>Fervidobacteriaceae</taxon>
        <taxon>Thermosipho</taxon>
    </lineage>
</organism>
<dbReference type="EMBL" id="CP000716">
    <property type="protein sequence ID" value="ABR31343.1"/>
    <property type="molecule type" value="Genomic_DNA"/>
</dbReference>
<dbReference type="RefSeq" id="WP_012057702.1">
    <property type="nucleotide sequence ID" value="NC_009616.1"/>
</dbReference>
<dbReference type="SMR" id="A6LN42"/>
<dbReference type="STRING" id="391009.Tmel_1498"/>
<dbReference type="KEGG" id="tme:Tmel_1498"/>
<dbReference type="eggNOG" id="COG0858">
    <property type="taxonomic scope" value="Bacteria"/>
</dbReference>
<dbReference type="HOGENOM" id="CLU_089475_6_5_0"/>
<dbReference type="OrthoDB" id="46605at2"/>
<dbReference type="Proteomes" id="UP000001110">
    <property type="component" value="Chromosome"/>
</dbReference>
<dbReference type="GO" id="GO:0005829">
    <property type="term" value="C:cytosol"/>
    <property type="evidence" value="ECO:0007669"/>
    <property type="project" value="TreeGrafter"/>
</dbReference>
<dbReference type="GO" id="GO:0043024">
    <property type="term" value="F:ribosomal small subunit binding"/>
    <property type="evidence" value="ECO:0007669"/>
    <property type="project" value="TreeGrafter"/>
</dbReference>
<dbReference type="GO" id="GO:0030490">
    <property type="term" value="P:maturation of SSU-rRNA"/>
    <property type="evidence" value="ECO:0007669"/>
    <property type="project" value="UniProtKB-UniRule"/>
</dbReference>
<dbReference type="Gene3D" id="3.30.300.20">
    <property type="match status" value="1"/>
</dbReference>
<dbReference type="HAMAP" id="MF_00003">
    <property type="entry name" value="RbfA"/>
    <property type="match status" value="1"/>
</dbReference>
<dbReference type="InterPro" id="IPR015946">
    <property type="entry name" value="KH_dom-like_a/b"/>
</dbReference>
<dbReference type="InterPro" id="IPR000238">
    <property type="entry name" value="RbfA"/>
</dbReference>
<dbReference type="InterPro" id="IPR023799">
    <property type="entry name" value="RbfA_dom_sf"/>
</dbReference>
<dbReference type="InterPro" id="IPR020053">
    <property type="entry name" value="Ribosome-bd_factorA_CS"/>
</dbReference>
<dbReference type="NCBIfam" id="TIGR00082">
    <property type="entry name" value="rbfA"/>
    <property type="match status" value="1"/>
</dbReference>
<dbReference type="PANTHER" id="PTHR33515">
    <property type="entry name" value="RIBOSOME-BINDING FACTOR A, CHLOROPLASTIC-RELATED"/>
    <property type="match status" value="1"/>
</dbReference>
<dbReference type="PANTHER" id="PTHR33515:SF1">
    <property type="entry name" value="RIBOSOME-BINDING FACTOR A, CHLOROPLASTIC-RELATED"/>
    <property type="match status" value="1"/>
</dbReference>
<dbReference type="Pfam" id="PF02033">
    <property type="entry name" value="RBFA"/>
    <property type="match status" value="1"/>
</dbReference>
<dbReference type="SUPFAM" id="SSF89919">
    <property type="entry name" value="Ribosome-binding factor A, RbfA"/>
    <property type="match status" value="1"/>
</dbReference>
<dbReference type="PROSITE" id="PS01319">
    <property type="entry name" value="RBFA"/>
    <property type="match status" value="1"/>
</dbReference>
<feature type="chain" id="PRO_1000000240" description="Ribosome-binding factor A">
    <location>
        <begin position="1"/>
        <end position="125"/>
    </location>
</feature>
<gene>
    <name evidence="1" type="primary">rbfA</name>
    <name type="ordered locus">Tmel_1498</name>
</gene>